<name>UVRA_STAAC</name>
<comment type="function">
    <text evidence="1">The UvrABC repair system catalyzes the recognition and processing of DNA lesions. UvrA is an ATPase and a DNA-binding protein. A damage recognition complex composed of 2 UvrA and 2 UvrB subunits scans DNA for abnormalities. When the presence of a lesion has been verified by UvrB, the UvrA molecules dissociate.</text>
</comment>
<comment type="subunit">
    <text evidence="1">Forms a heterotetramer with UvrB during the search for lesions.</text>
</comment>
<comment type="subcellular location">
    <subcellularLocation>
        <location evidence="1">Cytoplasm</location>
    </subcellularLocation>
</comment>
<comment type="similarity">
    <text evidence="1">Belongs to the ABC transporter superfamily. UvrA family.</text>
</comment>
<reference key="1">
    <citation type="journal article" date="2005" name="J. Bacteriol.">
        <title>Insights on evolution of virulence and resistance from the complete genome analysis of an early methicillin-resistant Staphylococcus aureus strain and a biofilm-producing methicillin-resistant Staphylococcus epidermidis strain.</title>
        <authorList>
            <person name="Gill S.R."/>
            <person name="Fouts D.E."/>
            <person name="Archer G.L."/>
            <person name="Mongodin E.F."/>
            <person name="DeBoy R.T."/>
            <person name="Ravel J."/>
            <person name="Paulsen I.T."/>
            <person name="Kolonay J.F."/>
            <person name="Brinkac L.M."/>
            <person name="Beanan M.J."/>
            <person name="Dodson R.J."/>
            <person name="Daugherty S.C."/>
            <person name="Madupu R."/>
            <person name="Angiuoli S.V."/>
            <person name="Durkin A.S."/>
            <person name="Haft D.H."/>
            <person name="Vamathevan J.J."/>
            <person name="Khouri H."/>
            <person name="Utterback T.R."/>
            <person name="Lee C."/>
            <person name="Dimitrov G."/>
            <person name="Jiang L."/>
            <person name="Qin H."/>
            <person name="Weidman J."/>
            <person name="Tran K."/>
            <person name="Kang K.H."/>
            <person name="Hance I.R."/>
            <person name="Nelson K.E."/>
            <person name="Fraser C.M."/>
        </authorList>
    </citation>
    <scope>NUCLEOTIDE SEQUENCE [LARGE SCALE GENOMIC DNA]</scope>
    <source>
        <strain>COL</strain>
    </source>
</reference>
<sequence length="948" mass="105368">MKEPSIVVKGARAHNLKDIDIELPKNKLIVMTGLSGSGKSSLAFDTIYAEGQRRYVESLSAYARQFLGQMDKPDVDTIEGLSPAISIDQKTTSKNPRSTVATVTEIYDYIRLLYARVGKPYCPNHNIEIESQTVQQMVDRIMELEARTKIQLLAPVIAHRKGSHEKLIEDIGKKGYVRLRIDGEIVDVNDVPTLDKNKNHTIEVVVDRLVVKDGIETRLADSIETALELSEGQLTVDVIDGEDLKFSESHACPICGFSIGELEPRMFSFNSPFGACPTCDGLGQKLTVDVDLVVPDKDKTLNEGAIEPWIPTSSDFYPTLLKRVCEVYKINMDKPFKKLTERQRDILLYGSGDKEIEFTFTQRQGGTRKRTMVFEGVVPNISRRFHESPSEYTREMMSKYMTELPCETCHGKRLSREALSVYVGGLNIGEVVEYSISQALNYYKNIDLSEQDQAIANQILKEIISRLTFLNNVGLEYLTLNRASGTLSGGEAQRIRLATQIGSRLTGVLYVLDEPSIGLHQRDNDRLINTLKEMRDLGNTLIVVEHDDDTMRAADYLVDIGPGAGEHGGQIVSSGTPQKVMKDKKSLTGQYLSGKKRIEVPEYRRPASDRKISIRGARSNNLKGVDVDIPLSIMTVVTGVSGSGKSSLVNEVLYKSLAQKINKSKVKPGLYDKIEGIDQLDKIIDIDQSPIGRTPRSNPATYTGVFDDIRDVFAQTNEAKIRGYQKGRFSFNVKGGRCEACKGDGIIKIEMHFLPDVYVPCEVCDGKRYNRETLEVTYKGKNIADILEMTVEEATQFFENIPKIKRKLQTLVDVGLGYVTLGQQATTLSGGEAQRVKLASELHKRSTGKSIYILDEPTTGLHVDDISRLLKVLNRLVENGDTVVIIEHNLDVIKTADYIIDLGPEGGSGGGTIVATGTPEDIAQTKSSYTGKYLKEVLERDKQNTEDK</sequence>
<keyword id="KW-0067">ATP-binding</keyword>
<keyword id="KW-0963">Cytoplasm</keyword>
<keyword id="KW-0227">DNA damage</keyword>
<keyword id="KW-0228">DNA excision</keyword>
<keyword id="KW-0234">DNA repair</keyword>
<keyword id="KW-0238">DNA-binding</keyword>
<keyword id="KW-0267">Excision nuclease</keyword>
<keyword id="KW-0479">Metal-binding</keyword>
<keyword id="KW-0547">Nucleotide-binding</keyword>
<keyword id="KW-0677">Repeat</keyword>
<keyword id="KW-0742">SOS response</keyword>
<keyword id="KW-0862">Zinc</keyword>
<keyword id="KW-0863">Zinc-finger</keyword>
<organism>
    <name type="scientific">Staphylococcus aureus (strain COL)</name>
    <dbReference type="NCBI Taxonomy" id="93062"/>
    <lineage>
        <taxon>Bacteria</taxon>
        <taxon>Bacillati</taxon>
        <taxon>Bacillota</taxon>
        <taxon>Bacilli</taxon>
        <taxon>Bacillales</taxon>
        <taxon>Staphylococcaceae</taxon>
        <taxon>Staphylococcus</taxon>
    </lineage>
</organism>
<feature type="chain" id="PRO_0000093089" description="UvrABC system protein A">
    <location>
        <begin position="1"/>
        <end position="948"/>
    </location>
</feature>
<feature type="domain" description="ABC transporter 1" evidence="1">
    <location>
        <begin position="309"/>
        <end position="587"/>
    </location>
</feature>
<feature type="domain" description="ABC transporter 2" evidence="1">
    <location>
        <begin position="607"/>
        <end position="935"/>
    </location>
</feature>
<feature type="zinc finger region" description="C4-type" evidence="1">
    <location>
        <begin position="252"/>
        <end position="279"/>
    </location>
</feature>
<feature type="zinc finger region" description="C4-type" evidence="1">
    <location>
        <begin position="738"/>
        <end position="764"/>
    </location>
</feature>
<feature type="binding site" evidence="1">
    <location>
        <begin position="33"/>
        <end position="40"/>
    </location>
    <ligand>
        <name>ATP</name>
        <dbReference type="ChEBI" id="CHEBI:30616"/>
    </ligand>
</feature>
<feature type="binding site" evidence="1">
    <location>
        <begin position="639"/>
        <end position="646"/>
    </location>
    <ligand>
        <name>ATP</name>
        <dbReference type="ChEBI" id="CHEBI:30616"/>
    </ligand>
</feature>
<proteinExistence type="inferred from homology"/>
<protein>
    <recommendedName>
        <fullName evidence="1">UvrABC system protein A</fullName>
        <shortName evidence="1">UvrA protein</shortName>
    </recommendedName>
    <alternativeName>
        <fullName evidence="1">Excinuclease ABC subunit A</fullName>
    </alternativeName>
</protein>
<gene>
    <name evidence="1" type="primary">uvrA</name>
    <name type="ordered locus">SACOL0824</name>
</gene>
<evidence type="ECO:0000255" key="1">
    <source>
        <dbReference type="HAMAP-Rule" id="MF_00205"/>
    </source>
</evidence>
<dbReference type="EMBL" id="CP000046">
    <property type="protein sequence ID" value="AAW36380.1"/>
    <property type="molecule type" value="Genomic_DNA"/>
</dbReference>
<dbReference type="RefSeq" id="WP_000662681.1">
    <property type="nucleotide sequence ID" value="NZ_JBGOFO010000005.1"/>
</dbReference>
<dbReference type="SMR" id="Q5HHQ9"/>
<dbReference type="KEGG" id="sac:SACOL0824"/>
<dbReference type="HOGENOM" id="CLU_001370_0_2_9"/>
<dbReference type="Proteomes" id="UP000000530">
    <property type="component" value="Chromosome"/>
</dbReference>
<dbReference type="GO" id="GO:0005737">
    <property type="term" value="C:cytoplasm"/>
    <property type="evidence" value="ECO:0007669"/>
    <property type="project" value="UniProtKB-SubCell"/>
</dbReference>
<dbReference type="GO" id="GO:0009380">
    <property type="term" value="C:excinuclease repair complex"/>
    <property type="evidence" value="ECO:0007669"/>
    <property type="project" value="InterPro"/>
</dbReference>
<dbReference type="GO" id="GO:0005524">
    <property type="term" value="F:ATP binding"/>
    <property type="evidence" value="ECO:0007669"/>
    <property type="project" value="UniProtKB-UniRule"/>
</dbReference>
<dbReference type="GO" id="GO:0016887">
    <property type="term" value="F:ATP hydrolysis activity"/>
    <property type="evidence" value="ECO:0007669"/>
    <property type="project" value="InterPro"/>
</dbReference>
<dbReference type="GO" id="GO:0003677">
    <property type="term" value="F:DNA binding"/>
    <property type="evidence" value="ECO:0007669"/>
    <property type="project" value="UniProtKB-UniRule"/>
</dbReference>
<dbReference type="GO" id="GO:0009381">
    <property type="term" value="F:excinuclease ABC activity"/>
    <property type="evidence" value="ECO:0007669"/>
    <property type="project" value="UniProtKB-UniRule"/>
</dbReference>
<dbReference type="GO" id="GO:0008270">
    <property type="term" value="F:zinc ion binding"/>
    <property type="evidence" value="ECO:0007669"/>
    <property type="project" value="UniProtKB-UniRule"/>
</dbReference>
<dbReference type="GO" id="GO:0006289">
    <property type="term" value="P:nucleotide-excision repair"/>
    <property type="evidence" value="ECO:0007669"/>
    <property type="project" value="UniProtKB-UniRule"/>
</dbReference>
<dbReference type="GO" id="GO:0009432">
    <property type="term" value="P:SOS response"/>
    <property type="evidence" value="ECO:0007669"/>
    <property type="project" value="UniProtKB-UniRule"/>
</dbReference>
<dbReference type="CDD" id="cd03270">
    <property type="entry name" value="ABC_UvrA_I"/>
    <property type="match status" value="1"/>
</dbReference>
<dbReference type="CDD" id="cd03271">
    <property type="entry name" value="ABC_UvrA_II"/>
    <property type="match status" value="1"/>
</dbReference>
<dbReference type="FunFam" id="1.20.1580.10:FF:000002">
    <property type="entry name" value="UvrABC system protein A"/>
    <property type="match status" value="1"/>
</dbReference>
<dbReference type="FunFam" id="3.40.50.300:FF:000028">
    <property type="entry name" value="UvrABC system protein A"/>
    <property type="match status" value="1"/>
</dbReference>
<dbReference type="Gene3D" id="1.10.8.280">
    <property type="entry name" value="ABC transporter ATPase domain-like"/>
    <property type="match status" value="1"/>
</dbReference>
<dbReference type="Gene3D" id="1.20.1580.10">
    <property type="entry name" value="ABC transporter ATPase like domain"/>
    <property type="match status" value="2"/>
</dbReference>
<dbReference type="Gene3D" id="3.30.1490.20">
    <property type="entry name" value="ATP-grasp fold, A domain"/>
    <property type="match status" value="1"/>
</dbReference>
<dbReference type="Gene3D" id="3.40.50.300">
    <property type="entry name" value="P-loop containing nucleotide triphosphate hydrolases"/>
    <property type="match status" value="2"/>
</dbReference>
<dbReference type="HAMAP" id="MF_00205">
    <property type="entry name" value="UvrA"/>
    <property type="match status" value="1"/>
</dbReference>
<dbReference type="InterPro" id="IPR003439">
    <property type="entry name" value="ABC_transporter-like_ATP-bd"/>
</dbReference>
<dbReference type="InterPro" id="IPR017871">
    <property type="entry name" value="ABC_transporter-like_CS"/>
</dbReference>
<dbReference type="InterPro" id="IPR013815">
    <property type="entry name" value="ATP_grasp_subdomain_1"/>
</dbReference>
<dbReference type="InterPro" id="IPR027417">
    <property type="entry name" value="P-loop_NTPase"/>
</dbReference>
<dbReference type="InterPro" id="IPR004602">
    <property type="entry name" value="UvrA"/>
</dbReference>
<dbReference type="InterPro" id="IPR041552">
    <property type="entry name" value="UvrA_DNA-bd"/>
</dbReference>
<dbReference type="InterPro" id="IPR041102">
    <property type="entry name" value="UvrA_inter"/>
</dbReference>
<dbReference type="NCBIfam" id="NF001503">
    <property type="entry name" value="PRK00349.1"/>
    <property type="match status" value="1"/>
</dbReference>
<dbReference type="NCBIfam" id="TIGR00630">
    <property type="entry name" value="uvra"/>
    <property type="match status" value="1"/>
</dbReference>
<dbReference type="PANTHER" id="PTHR43152">
    <property type="entry name" value="UVRABC SYSTEM PROTEIN A"/>
    <property type="match status" value="1"/>
</dbReference>
<dbReference type="PANTHER" id="PTHR43152:SF3">
    <property type="entry name" value="UVRABC SYSTEM PROTEIN A"/>
    <property type="match status" value="1"/>
</dbReference>
<dbReference type="Pfam" id="PF17755">
    <property type="entry name" value="UvrA_DNA-bind"/>
    <property type="match status" value="1"/>
</dbReference>
<dbReference type="Pfam" id="PF17760">
    <property type="entry name" value="UvrA_inter"/>
    <property type="match status" value="1"/>
</dbReference>
<dbReference type="SUPFAM" id="SSF52540">
    <property type="entry name" value="P-loop containing nucleoside triphosphate hydrolases"/>
    <property type="match status" value="2"/>
</dbReference>
<dbReference type="PROSITE" id="PS00211">
    <property type="entry name" value="ABC_TRANSPORTER_1"/>
    <property type="match status" value="2"/>
</dbReference>
<dbReference type="PROSITE" id="PS50893">
    <property type="entry name" value="ABC_TRANSPORTER_2"/>
    <property type="match status" value="1"/>
</dbReference>
<accession>Q5HHQ9</accession>